<feature type="chain" id="PRO_0000080419" description="Meiosis-specific cyclin rem1">
    <location>
        <begin position="1"/>
        <end position="402"/>
    </location>
</feature>
<name>REM1_SCHPO</name>
<gene>
    <name type="primary">rem1</name>
    <name type="ORF">SPBC16E9.17c</name>
</gene>
<organism>
    <name type="scientific">Schizosaccharomyces pombe (strain 972 / ATCC 24843)</name>
    <name type="common">Fission yeast</name>
    <dbReference type="NCBI Taxonomy" id="284812"/>
    <lineage>
        <taxon>Eukaryota</taxon>
        <taxon>Fungi</taxon>
        <taxon>Dikarya</taxon>
        <taxon>Ascomycota</taxon>
        <taxon>Taphrinomycotina</taxon>
        <taxon>Schizosaccharomycetes</taxon>
        <taxon>Schizosaccharomycetales</taxon>
        <taxon>Schizosaccharomycetaceae</taxon>
        <taxon>Schizosaccharomyces</taxon>
    </lineage>
</organism>
<keyword id="KW-0131">Cell cycle</keyword>
<keyword id="KW-0132">Cell division</keyword>
<keyword id="KW-0195">Cyclin</keyword>
<keyword id="KW-0469">Meiosis</keyword>
<keyword id="KW-1185">Reference proteome</keyword>
<reference key="1">
    <citation type="journal article" date="2002" name="Nature">
        <title>The genome sequence of Schizosaccharomyces pombe.</title>
        <authorList>
            <person name="Wood V."/>
            <person name="Gwilliam R."/>
            <person name="Rajandream M.A."/>
            <person name="Lyne M.H."/>
            <person name="Lyne R."/>
            <person name="Stewart A."/>
            <person name="Sgouros J.G."/>
            <person name="Peat N."/>
            <person name="Hayles J."/>
            <person name="Baker S.G."/>
            <person name="Basham D."/>
            <person name="Bowman S."/>
            <person name="Brooks K."/>
            <person name="Brown D."/>
            <person name="Brown S."/>
            <person name="Chillingworth T."/>
            <person name="Churcher C.M."/>
            <person name="Collins M."/>
            <person name="Connor R."/>
            <person name="Cronin A."/>
            <person name="Davis P."/>
            <person name="Feltwell T."/>
            <person name="Fraser A."/>
            <person name="Gentles S."/>
            <person name="Goble A."/>
            <person name="Hamlin N."/>
            <person name="Harris D.E."/>
            <person name="Hidalgo J."/>
            <person name="Hodgson G."/>
            <person name="Holroyd S."/>
            <person name="Hornsby T."/>
            <person name="Howarth S."/>
            <person name="Huckle E.J."/>
            <person name="Hunt S."/>
            <person name="Jagels K."/>
            <person name="James K.D."/>
            <person name="Jones L."/>
            <person name="Jones M."/>
            <person name="Leather S."/>
            <person name="McDonald S."/>
            <person name="McLean J."/>
            <person name="Mooney P."/>
            <person name="Moule S."/>
            <person name="Mungall K.L."/>
            <person name="Murphy L.D."/>
            <person name="Niblett D."/>
            <person name="Odell C."/>
            <person name="Oliver K."/>
            <person name="O'Neil S."/>
            <person name="Pearson D."/>
            <person name="Quail M.A."/>
            <person name="Rabbinowitsch E."/>
            <person name="Rutherford K.M."/>
            <person name="Rutter S."/>
            <person name="Saunders D."/>
            <person name="Seeger K."/>
            <person name="Sharp S."/>
            <person name="Skelton J."/>
            <person name="Simmonds M.N."/>
            <person name="Squares R."/>
            <person name="Squares S."/>
            <person name="Stevens K."/>
            <person name="Taylor K."/>
            <person name="Taylor R.G."/>
            <person name="Tivey A."/>
            <person name="Walsh S.V."/>
            <person name="Warren T."/>
            <person name="Whitehead S."/>
            <person name="Woodward J.R."/>
            <person name="Volckaert G."/>
            <person name="Aert R."/>
            <person name="Robben J."/>
            <person name="Grymonprez B."/>
            <person name="Weltjens I."/>
            <person name="Vanstreels E."/>
            <person name="Rieger M."/>
            <person name="Schaefer M."/>
            <person name="Mueller-Auer S."/>
            <person name="Gabel C."/>
            <person name="Fuchs M."/>
            <person name="Duesterhoeft A."/>
            <person name="Fritzc C."/>
            <person name="Holzer E."/>
            <person name="Moestl D."/>
            <person name="Hilbert H."/>
            <person name="Borzym K."/>
            <person name="Langer I."/>
            <person name="Beck A."/>
            <person name="Lehrach H."/>
            <person name="Reinhardt R."/>
            <person name="Pohl T.M."/>
            <person name="Eger P."/>
            <person name="Zimmermann W."/>
            <person name="Wedler H."/>
            <person name="Wambutt R."/>
            <person name="Purnelle B."/>
            <person name="Goffeau A."/>
            <person name="Cadieu E."/>
            <person name="Dreano S."/>
            <person name="Gloux S."/>
            <person name="Lelaure V."/>
            <person name="Mottier S."/>
            <person name="Galibert F."/>
            <person name="Aves S.J."/>
            <person name="Xiang Z."/>
            <person name="Hunt C."/>
            <person name="Moore K."/>
            <person name="Hurst S.M."/>
            <person name="Lucas M."/>
            <person name="Rochet M."/>
            <person name="Gaillardin C."/>
            <person name="Tallada V.A."/>
            <person name="Garzon A."/>
            <person name="Thode G."/>
            <person name="Daga R.R."/>
            <person name="Cruzado L."/>
            <person name="Jimenez J."/>
            <person name="Sanchez M."/>
            <person name="del Rey F."/>
            <person name="Benito J."/>
            <person name="Dominguez A."/>
            <person name="Revuelta J.L."/>
            <person name="Moreno S."/>
            <person name="Armstrong J."/>
            <person name="Forsburg S.L."/>
            <person name="Cerutti L."/>
            <person name="Lowe T."/>
            <person name="McCombie W.R."/>
            <person name="Paulsen I."/>
            <person name="Potashkin J."/>
            <person name="Shpakovski G.V."/>
            <person name="Ussery D."/>
            <person name="Barrell B.G."/>
            <person name="Nurse P."/>
        </authorList>
    </citation>
    <scope>NUCLEOTIDE SEQUENCE [LARGE SCALE GENOMIC DNA]</scope>
    <source>
        <strain>972 / ATCC 24843</strain>
    </source>
</reference>
<reference key="2">
    <citation type="journal article" date="2005" name="Mol. Cell. Biol.">
        <title>A meiosis-specific cyclin regulated by splicing is required for proper progression through meiosis.</title>
        <authorList>
            <person name="Malapeira J."/>
            <person name="Moldon A."/>
            <person name="Hidalgo E."/>
            <person name="Smith G.R."/>
            <person name="Nurse P."/>
            <person name="Ayte J."/>
        </authorList>
    </citation>
    <scope>FUNCTION</scope>
</reference>
<evidence type="ECO:0000269" key="1">
    <source>
    </source>
</evidence>
<evidence type="ECO:0000305" key="2"/>
<dbReference type="EMBL" id="CU329671">
    <property type="protein sequence ID" value="CAB16909.1"/>
    <property type="molecule type" value="Genomic_DNA"/>
</dbReference>
<dbReference type="PIR" id="T39591">
    <property type="entry name" value="T39591"/>
</dbReference>
<dbReference type="RefSeq" id="NP_595798.1">
    <property type="nucleotide sequence ID" value="NM_001021699.2"/>
</dbReference>
<dbReference type="SMR" id="O14332"/>
<dbReference type="BioGRID" id="276655">
    <property type="interactions" value="81"/>
</dbReference>
<dbReference type="FunCoup" id="O14332">
    <property type="interactions" value="15"/>
</dbReference>
<dbReference type="STRING" id="284812.O14332"/>
<dbReference type="PaxDb" id="4896-SPBC16E9.17c.1"/>
<dbReference type="EnsemblFungi" id="SPBC16E9.17c.1">
    <property type="protein sequence ID" value="SPBC16E9.17c.1:pep"/>
    <property type="gene ID" value="SPBC16E9.17c"/>
</dbReference>
<dbReference type="GeneID" id="2540118"/>
<dbReference type="KEGG" id="spo:2540118"/>
<dbReference type="PomBase" id="SPBC16E9.17c">
    <property type="gene designation" value="rem1"/>
</dbReference>
<dbReference type="VEuPathDB" id="FungiDB:SPBC16E9.17c"/>
<dbReference type="eggNOG" id="KOG0653">
    <property type="taxonomic scope" value="Eukaryota"/>
</dbReference>
<dbReference type="HOGENOM" id="CLU_020695_2_4_1"/>
<dbReference type="InParanoid" id="O14332"/>
<dbReference type="OMA" id="KNAEMFM"/>
<dbReference type="PhylomeDB" id="O14332"/>
<dbReference type="PRO" id="PR:O14332"/>
<dbReference type="Proteomes" id="UP000002485">
    <property type="component" value="Chromosome II"/>
</dbReference>
<dbReference type="GO" id="GO:0000307">
    <property type="term" value="C:cyclin-dependent protein kinase holoenzyme complex"/>
    <property type="evidence" value="ECO:0000318"/>
    <property type="project" value="GO_Central"/>
</dbReference>
<dbReference type="GO" id="GO:0005737">
    <property type="term" value="C:cytoplasm"/>
    <property type="evidence" value="ECO:0000318"/>
    <property type="project" value="GO_Central"/>
</dbReference>
<dbReference type="GO" id="GO:0005829">
    <property type="term" value="C:cytosol"/>
    <property type="evidence" value="ECO:0007005"/>
    <property type="project" value="PomBase"/>
</dbReference>
<dbReference type="GO" id="GO:0005815">
    <property type="term" value="C:microtubule organizing center"/>
    <property type="evidence" value="ECO:0000318"/>
    <property type="project" value="GO_Central"/>
</dbReference>
<dbReference type="GO" id="GO:0005635">
    <property type="term" value="C:nuclear envelope"/>
    <property type="evidence" value="ECO:0007005"/>
    <property type="project" value="PomBase"/>
</dbReference>
<dbReference type="GO" id="GO:0005634">
    <property type="term" value="C:nucleus"/>
    <property type="evidence" value="ECO:0007005"/>
    <property type="project" value="PomBase"/>
</dbReference>
<dbReference type="GO" id="GO:0016538">
    <property type="term" value="F:cyclin-dependent protein serine/threonine kinase regulator activity"/>
    <property type="evidence" value="ECO:0000318"/>
    <property type="project" value="GO_Central"/>
</dbReference>
<dbReference type="GO" id="GO:0051301">
    <property type="term" value="P:cell division"/>
    <property type="evidence" value="ECO:0007669"/>
    <property type="project" value="UniProtKB-KW"/>
</dbReference>
<dbReference type="GO" id="GO:0033260">
    <property type="term" value="P:nuclear DNA replication"/>
    <property type="evidence" value="ECO:0000316"/>
    <property type="project" value="PomBase"/>
</dbReference>
<dbReference type="GO" id="GO:0007131">
    <property type="term" value="P:reciprocal meiotic recombination"/>
    <property type="evidence" value="ECO:0000315"/>
    <property type="project" value="PomBase"/>
</dbReference>
<dbReference type="GO" id="GO:0051445">
    <property type="term" value="P:regulation of meiotic cell cycle"/>
    <property type="evidence" value="ECO:0000303"/>
    <property type="project" value="PomBase"/>
</dbReference>
<dbReference type="GO" id="GO:0023052">
    <property type="term" value="P:signaling"/>
    <property type="evidence" value="ECO:0000303"/>
    <property type="project" value="PomBase"/>
</dbReference>
<dbReference type="CDD" id="cd20536">
    <property type="entry name" value="CYCLIN_CCNO_rpt1"/>
    <property type="match status" value="1"/>
</dbReference>
<dbReference type="FunFam" id="1.10.472.10:FF:000001">
    <property type="entry name" value="G2/mitotic-specific cyclin"/>
    <property type="match status" value="1"/>
</dbReference>
<dbReference type="Gene3D" id="1.10.472.10">
    <property type="entry name" value="Cyclin-like"/>
    <property type="match status" value="2"/>
</dbReference>
<dbReference type="InterPro" id="IPR039361">
    <property type="entry name" value="Cyclin"/>
</dbReference>
<dbReference type="InterPro" id="IPR013763">
    <property type="entry name" value="Cyclin-like_dom"/>
</dbReference>
<dbReference type="InterPro" id="IPR036915">
    <property type="entry name" value="Cyclin-like_sf"/>
</dbReference>
<dbReference type="InterPro" id="IPR004367">
    <property type="entry name" value="Cyclin_C-dom"/>
</dbReference>
<dbReference type="InterPro" id="IPR006671">
    <property type="entry name" value="Cyclin_N"/>
</dbReference>
<dbReference type="InterPro" id="IPR048258">
    <property type="entry name" value="Cyclins_cyclin-box"/>
</dbReference>
<dbReference type="PANTHER" id="PTHR10177">
    <property type="entry name" value="CYCLINS"/>
    <property type="match status" value="1"/>
</dbReference>
<dbReference type="Pfam" id="PF02984">
    <property type="entry name" value="Cyclin_C"/>
    <property type="match status" value="1"/>
</dbReference>
<dbReference type="Pfam" id="PF00134">
    <property type="entry name" value="Cyclin_N"/>
    <property type="match status" value="1"/>
</dbReference>
<dbReference type="SMART" id="SM00385">
    <property type="entry name" value="CYCLIN"/>
    <property type="match status" value="2"/>
</dbReference>
<dbReference type="SMART" id="SM01332">
    <property type="entry name" value="Cyclin_C"/>
    <property type="match status" value="1"/>
</dbReference>
<dbReference type="SUPFAM" id="SSF47954">
    <property type="entry name" value="Cyclin-like"/>
    <property type="match status" value="2"/>
</dbReference>
<dbReference type="PROSITE" id="PS00292">
    <property type="entry name" value="CYCLINS"/>
    <property type="match status" value="1"/>
</dbReference>
<protein>
    <recommendedName>
        <fullName>Meiosis-specific cyclin rem1</fullName>
    </recommendedName>
</protein>
<proteinExistence type="inferred from homology"/>
<comment type="function">
    <text evidence="1">Required for pre-meiotic DNA synthesis and S phase progression. Regulates levels of meiotic intragenic recombination.</text>
</comment>
<comment type="similarity">
    <text evidence="2">Belongs to the cyclin family. Cyclin AB subfamily.</text>
</comment>
<sequence>MNSNNKRVALQEISNYVSKSLNVKGWVNAQVREISLQNGCSPSDKHFPSQSWHGISSIEESQIQKDYDSFLASPLEEEIVFTEKQLLVDLDVCSISNVQSPNCSVSEFGIAIEESNDNCAEEDEEEELQMRYSADESVSVEYAKEILSHMEKLEIRFMPDYRHMSAQPYYVTEMRASVINWIVGVHTCINLLPESLFLSINVLDRFLSLQNVPASKMKLCGATALFIACKYEEIHPPTVKDLEIVLEGEWIGEDICGMEKYMLMVLQYQLGWPGPVSFLRLLTIVNKWESQLRIMIKYFLEVSLVEQRFSSLRASQLVATCAYTGQSILQEENWSNTLPQITGYDYMSLVSYVHLLLKCLENPFDHHYAIYSKYATPYFHGISRQVHDWIATNTNLMAMDGS</sequence>
<accession>O14332</accession>